<dbReference type="EMBL" id="D90202">
    <property type="protein sequence ID" value="BAA14226.1"/>
    <property type="molecule type" value="Genomic_DNA"/>
</dbReference>
<dbReference type="PIR" id="B38176">
    <property type="entry name" value="B38176"/>
</dbReference>
<dbReference type="SMR" id="P23832"/>
<dbReference type="GO" id="GO:0005829">
    <property type="term" value="C:cytosol"/>
    <property type="evidence" value="ECO:0007669"/>
    <property type="project" value="TreeGrafter"/>
</dbReference>
<dbReference type="GO" id="GO:0003684">
    <property type="term" value="F:damaged DNA binding"/>
    <property type="evidence" value="ECO:0007669"/>
    <property type="project" value="InterPro"/>
</dbReference>
<dbReference type="GO" id="GO:0003887">
    <property type="term" value="F:DNA-directed DNA polymerase activity"/>
    <property type="evidence" value="ECO:0007669"/>
    <property type="project" value="TreeGrafter"/>
</dbReference>
<dbReference type="GO" id="GO:0042276">
    <property type="term" value="P:error-prone translesion synthesis"/>
    <property type="evidence" value="ECO:0007669"/>
    <property type="project" value="TreeGrafter"/>
</dbReference>
<dbReference type="GO" id="GO:0009432">
    <property type="term" value="P:SOS response"/>
    <property type="evidence" value="ECO:0007669"/>
    <property type="project" value="UniProtKB-KW"/>
</dbReference>
<dbReference type="CDD" id="cd01700">
    <property type="entry name" value="PolY_Pol_V_umuC"/>
    <property type="match status" value="1"/>
</dbReference>
<dbReference type="Gene3D" id="3.30.70.270">
    <property type="match status" value="1"/>
</dbReference>
<dbReference type="Gene3D" id="3.40.1170.60">
    <property type="match status" value="1"/>
</dbReference>
<dbReference type="Gene3D" id="1.10.150.20">
    <property type="entry name" value="5' to 3' exonuclease, C-terminal subdomain"/>
    <property type="match status" value="1"/>
</dbReference>
<dbReference type="Gene3D" id="3.30.1490.100">
    <property type="entry name" value="DNA polymerase, Y-family, little finger domain"/>
    <property type="match status" value="1"/>
</dbReference>
<dbReference type="InterPro" id="IPR043502">
    <property type="entry name" value="DNA/RNA_pol_sf"/>
</dbReference>
<dbReference type="InterPro" id="IPR036775">
    <property type="entry name" value="DNA_pol_Y-fam_lit_finger_sf"/>
</dbReference>
<dbReference type="InterPro" id="IPR017961">
    <property type="entry name" value="DNA_pol_Y-fam_little_finger"/>
</dbReference>
<dbReference type="InterPro" id="IPR050116">
    <property type="entry name" value="DNA_polymerase-Y"/>
</dbReference>
<dbReference type="InterPro" id="IPR025188">
    <property type="entry name" value="DUF4113"/>
</dbReference>
<dbReference type="InterPro" id="IPR043128">
    <property type="entry name" value="Rev_trsase/Diguanyl_cyclase"/>
</dbReference>
<dbReference type="InterPro" id="IPR001126">
    <property type="entry name" value="UmuC"/>
</dbReference>
<dbReference type="NCBIfam" id="NF002955">
    <property type="entry name" value="PRK03609.1"/>
    <property type="match status" value="1"/>
</dbReference>
<dbReference type="PANTHER" id="PTHR11076">
    <property type="entry name" value="DNA REPAIR POLYMERASE UMUC / TRANSFERASE FAMILY MEMBER"/>
    <property type="match status" value="1"/>
</dbReference>
<dbReference type="PANTHER" id="PTHR11076:SF34">
    <property type="entry name" value="PROTEIN UMUC"/>
    <property type="match status" value="1"/>
</dbReference>
<dbReference type="Pfam" id="PF13438">
    <property type="entry name" value="DUF4113"/>
    <property type="match status" value="1"/>
</dbReference>
<dbReference type="Pfam" id="PF00817">
    <property type="entry name" value="IMS"/>
    <property type="match status" value="1"/>
</dbReference>
<dbReference type="Pfam" id="PF11799">
    <property type="entry name" value="IMS_C"/>
    <property type="match status" value="1"/>
</dbReference>
<dbReference type="SUPFAM" id="SSF56672">
    <property type="entry name" value="DNA/RNA polymerases"/>
    <property type="match status" value="1"/>
</dbReference>
<dbReference type="SUPFAM" id="SSF100879">
    <property type="entry name" value="Lesion bypass DNA polymerase (Y-family), little finger domain"/>
    <property type="match status" value="1"/>
</dbReference>
<dbReference type="PROSITE" id="PS50173">
    <property type="entry name" value="UMUC"/>
    <property type="match status" value="1"/>
</dbReference>
<geneLocation type="plasmid">
    <name>60-MDa cryptic</name>
</geneLocation>
<evidence type="ECO:0000255" key="1">
    <source>
        <dbReference type="PROSITE-ProRule" id="PRU00216"/>
    </source>
</evidence>
<evidence type="ECO:0000305" key="2"/>
<comment type="function">
    <text>Involved in UV protection and mutation.</text>
</comment>
<comment type="similarity">
    <text evidence="2">Belongs to the DNA polymerase type-Y family.</text>
</comment>
<protein>
    <recommendedName>
        <fullName>Protein SamB</fullName>
    </recommendedName>
</protein>
<keyword id="KW-0227">DNA damage</keyword>
<keyword id="KW-0234">DNA repair</keyword>
<keyword id="KW-0614">Plasmid</keyword>
<keyword id="KW-0741">SOS mutagenesis</keyword>
<keyword id="KW-0742">SOS response</keyword>
<proteinExistence type="inferred from homology"/>
<sequence>MFALADVNSFYASCEKVFRPDLRDRSVVVLSNNDGCVIPRSAEAKKLGIKMGVPWFQLRSAKFPEPVIAFSSNYALYASMSNRVMVHLEELAPRVEQYSIDEMFLDIRGIDSCIDFEDFGRQLREHVRSGTGLTIGVGMGPTKTLAKSAQWASKEWSQFGGVLALTLHNQKRTEKLLSLQPVEEIWGVGRRISKKLNTMGITTALQLARANPTFIRKNFNVVLERTVRELNGESCISLEEAPPPKQQIVCSRSFGERVTTYEAMRQAVCQHAERAAEKLRGERQFCRHIAVFVKTSPFAVTEPYYGNLASEKLLIPTQDTRDIIAAAVRALDRIWVDGHRYAKAGCMLNDFTPTGVSQLNLFDEVQPRERSEQLMQVLDGINHPGKGKIWFAGRGIAPEWQMKRELLSPAYTTRWADIPAAKLT</sequence>
<accession>P23832</accession>
<gene>
    <name type="primary">samB</name>
</gene>
<organism>
    <name type="scientific">Salmonella typhimurium</name>
    <dbReference type="NCBI Taxonomy" id="90371"/>
    <lineage>
        <taxon>Bacteria</taxon>
        <taxon>Pseudomonadati</taxon>
        <taxon>Pseudomonadota</taxon>
        <taxon>Gammaproteobacteria</taxon>
        <taxon>Enterobacterales</taxon>
        <taxon>Enterobacteriaceae</taxon>
        <taxon>Salmonella</taxon>
    </lineage>
</organism>
<name>SAMB_SALTM</name>
<feature type="chain" id="PRO_0000173981" description="Protein SamB">
    <location>
        <begin position="1"/>
        <end position="424"/>
    </location>
</feature>
<feature type="domain" description="UmuC" evidence="1">
    <location>
        <begin position="2"/>
        <end position="189"/>
    </location>
</feature>
<reference key="1">
    <citation type="journal article" date="1991" name="J. Bacteriol.">
        <title>Salmonella typhimurium has two homologous but different umuDC operons: cloning of a new umuDC-like operon (samAB) present in a 60-megadalton cryptic plasmid of S. typhimurium.</title>
        <authorList>
            <person name="Nohmi T."/>
            <person name="Hakura A."/>
            <person name="Nakai Y."/>
            <person name="Watanabe M."/>
            <person name="Murayama S.Y."/>
            <person name="Sofuni T."/>
        </authorList>
    </citation>
    <scope>NUCLEOTIDE SEQUENCE [GENOMIC DNA]</scope>
    <source>
        <strain>ATCC 29631 / TA 1538</strain>
    </source>
</reference>